<sequence length="566" mass="63575">MKTIIALSYIFCLALGQDLPGNDNSTATLCLGHHAVPNGTLVKTITDDQIEVTNATELVQSSSTGKICNNPHRILDGIDCTLIDALLGDPHCDVFQKETWDLFVERSKAFSNCYPYDVPDYASLRSLVASSGTLEFITEGFTWTGVTQNGGSIACKRGPDSGFFSRLNWLTKSESTYPVLNVTMPNNDNFDKLYIWGIHHPSTNQEQTSLYVQASGRVTVSTRRSQQTIIPNIGSRPWVRGLSSRISIYWTIVKPGDVLVINSNGNLIAPRGYFKMRTGKSSIMRSDAPIDTCISECITPNGSIPNDKPFQNVNKITYGACPKYVKQNTLKLATGMRNVPEKQTRGLFGAIAGFIENGWEGMIDGWYGFRHQNSEGTGQAADLKSTQAAIDQINGKLNRVIEKTNEKFHQIEKEFSEVEGRIQDLEKYVEDTKIDLWSYNAELLVALENQHTIDLTDSEMNKLFEKTRRQLRENAEDMGNGCFKIYHKCDNACIESIRNGTYDHDVYRDEALNNRFQIKGVELKSGYKDWILWISFAISCFLLCVVLLGFIMWTCQRGNIRCNICI</sequence>
<proteinExistence type="evidence at protein level"/>
<gene>
    <name evidence="1" type="primary">HA</name>
</gene>
<keyword id="KW-0002">3D-structure</keyword>
<keyword id="KW-1167">Clathrin- and caveolin-independent endocytosis of virus by host</keyword>
<keyword id="KW-1165">Clathrin-mediated endocytosis of virus by host</keyword>
<keyword id="KW-1015">Disulfide bond</keyword>
<keyword id="KW-1170">Fusion of virus membrane with host endosomal membrane</keyword>
<keyword id="KW-1168">Fusion of virus membrane with host membrane</keyword>
<keyword id="KW-0325">Glycoprotein</keyword>
<keyword id="KW-0348">Hemagglutinin</keyword>
<keyword id="KW-1032">Host cell membrane</keyword>
<keyword id="KW-1043">Host membrane</keyword>
<keyword id="KW-0945">Host-virus interaction</keyword>
<keyword id="KW-0449">Lipoprotein</keyword>
<keyword id="KW-0472">Membrane</keyword>
<keyword id="KW-0564">Palmitate</keyword>
<keyword id="KW-0732">Signal</keyword>
<keyword id="KW-0812">Transmembrane</keyword>
<keyword id="KW-1133">Transmembrane helix</keyword>
<keyword id="KW-1161">Viral attachment to host cell</keyword>
<keyword id="KW-0261">Viral envelope protein</keyword>
<keyword id="KW-1162">Viral penetration into host cytoplasm</keyword>
<keyword id="KW-0946">Virion</keyword>
<keyword id="KW-1164">Virus endocytosis by host</keyword>
<keyword id="KW-1160">Virus entry into host cell</keyword>
<name>HEMA_I000X</name>
<organism>
    <name type="scientific">Influenza A virus (strain A/X-31 H3N2)</name>
    <dbReference type="NCBI Taxonomy" id="132504"/>
    <lineage>
        <taxon>Viruses</taxon>
        <taxon>Riboviria</taxon>
        <taxon>Orthornavirae</taxon>
        <taxon>Negarnaviricota</taxon>
        <taxon>Polyploviricotina</taxon>
        <taxon>Insthoviricetes</taxon>
        <taxon>Articulavirales</taxon>
        <taxon>Orthomyxoviridae</taxon>
        <taxon>Alphainfluenzavirus</taxon>
        <taxon>Alphainfluenzavirus influenzae</taxon>
        <taxon>Influenza A virus</taxon>
    </lineage>
</organism>
<comment type="function">
    <text evidence="2">Binds to sialic acid-containing receptors on the cell surface, bringing about the attachment of the virus particle to the cell. This attachment induces virion internalization of about two third of the virus particles through clathrin-dependent endocytosis and about one third through a clathrin- and caveolin-independent pathway. Plays a major role in the determination of host range restriction and virulence. Class I viral fusion protein. Responsible for penetration of the virus into the cell cytoplasm by mediating the fusion of the membrane of the endocytosed virus particle with the endosomal membrane. Low pH in endosomes induces an irreversible conformational change in HA2, releasing the fusion hydrophobic peptide. Several trimers are required to form a competent fusion pore.</text>
</comment>
<comment type="function">
    <text evidence="1">Binds to sialic acid-containing receptors on the cell surface, bringing about the attachment of the virus particle to the cell. This attachment induces virion internalization either through clathrin-dependent endocytosis or through clathrin- and caveolin-independent pathway. Plays a major role in the determination of host range restriction and virulence. Class I viral fusion protein. Responsible for penetration of the virus into the cell cytoplasm by mediating the fusion of the membrane of the endocytosed virus particle with the endosomal membrane. Low pH in endosomes induces an irreversible conformational change in HA2, releasing the fusion hydrophobic peptide. Several trimers are required to form a competent fusion pore.</text>
</comment>
<comment type="subunit">
    <text evidence="1">Homotrimer of disulfide-linked HA1-HA2.</text>
</comment>
<comment type="subcellular location">
    <subcellularLocation>
        <location evidence="1">Virion membrane</location>
        <topology evidence="1">Single-pass type I membrane protein</topology>
    </subcellularLocation>
    <subcellularLocation>
        <location evidence="1">Host apical cell membrane</location>
        <topology evidence="1">Single-pass type I membrane protein</topology>
    </subcellularLocation>
    <text evidence="1">Targeted to the apical plasma membrane in epithelial polarized cells through a signal present in the transmembrane domain. Associated with glycosphingolipid- and cholesterol-enriched detergent-resistant lipid rafts.</text>
</comment>
<comment type="PTM">
    <text evidence="1">Palmitoylated.</text>
</comment>
<comment type="PTM">
    <text evidence="1">In natural infection, inactive HA is matured into HA1 and HA2 outside the cell by one or more trypsin-like, arginine-specific endoprotease secreted by the bronchial epithelial cells. One identified protease that may be involved in this process is secreted in lungs by club cells.</text>
</comment>
<comment type="miscellaneous">
    <text>Major glycoprotein, comprises over 80% of the envelope proteins present in virus particle.</text>
</comment>
<comment type="miscellaneous">
    <text>The extent of infection into host organism is determined by HA. Influenza viruses bud from the apical surface of polarized epithelial cells (e.g. bronchial epithelial cells) into lumen of lungs and are therefore usually pneumotropic. The reason is that HA is cleaved by tryptase clara which is restricted to lungs. However, HAs of H5 and H7 pantropic avian viruses subtypes can be cleaved by furin and subtilisin-type enzymes, allowing the virus to grow in other organs than lungs.</text>
</comment>
<comment type="miscellaneous">
    <text evidence="3">The influenza A genome consist of 8 RNA segments. Genetic variation of hemagglutinin and/or neuraminidase genes results in the emergence of new influenza strains. The mechanism of variation can be the result of point mutations or the result of genetic reassortment between segments of two different strains.</text>
</comment>
<comment type="similarity">
    <text evidence="1">Belongs to the influenza viruses hemagglutinin family.</text>
</comment>
<evidence type="ECO:0000255" key="1">
    <source>
        <dbReference type="HAMAP-Rule" id="MF_04072"/>
    </source>
</evidence>
<evidence type="ECO:0000269" key="2">
    <source>
    </source>
</evidence>
<evidence type="ECO:0000305" key="3"/>
<evidence type="ECO:0007829" key="4">
    <source>
        <dbReference type="PDB" id="1HGE"/>
    </source>
</evidence>
<evidence type="ECO:0007829" key="5">
    <source>
        <dbReference type="PDB" id="1QFU"/>
    </source>
</evidence>
<protein>
    <recommendedName>
        <fullName evidence="1">Hemagglutinin</fullName>
    </recommendedName>
    <component>
        <recommendedName>
            <fullName evidence="1">Hemagglutinin HA1 chain</fullName>
        </recommendedName>
    </component>
    <component>
        <recommendedName>
            <fullName evidence="1">Hemagglutinin HA2 chain</fullName>
        </recommendedName>
    </component>
</protein>
<reference key="1">
    <citation type="submission" date="2006-08" db="EMBL/GenBank/DDBJ databases">
        <title>Identification of mutations in the cold-adapted X-31 ca influenza vaccine strain.</title>
        <authorList>
            <person name="Lee K.-H."/>
            <person name="Kim Y.H."/>
            <person name="Ha S.-H."/>
            <person name="Kim H.A."/>
            <person name="Seo S.-U."/>
            <person name="Seong B.L."/>
        </authorList>
    </citation>
    <scope>NUCLEOTIDE SEQUENCE [GENOMIC RNA]</scope>
</reference>
<reference key="2">
    <citation type="journal article" date="1980" name="Nature">
        <title>Cloning and DNA sequence of double-stranded copies of haemagglutinin genes from H2 and H3 strains elucidates antigenic shift and drift in human influenza virus.</title>
        <authorList>
            <person name="Gething M.-J."/>
            <person name="Bye J."/>
            <person name="Skehel J.J."/>
            <person name="Waterfield M."/>
        </authorList>
    </citation>
    <scope>NUCLEOTIDE SEQUENCE OF 1-249</scope>
</reference>
<reference key="3">
    <citation type="journal article" date="2004" name="Nat. Struct. Mol. Biol.">
        <title>Assembly of endocytic machinery around individual influenza viruses during viral entry.</title>
        <authorList>
            <person name="Rust M.J."/>
            <person name="Lakadamyali M."/>
            <person name="Zhang F."/>
            <person name="Zhuang X."/>
        </authorList>
    </citation>
    <scope>FUNCTION</scope>
</reference>
<reference key="4">
    <citation type="journal article" date="1993" name="J. Mol. Biol.">
        <title>Detailed analysis of the free and bound conformations of an antibody. X-ray structures of Fab 17/9 and three different Fab-peptide complexes.</title>
        <authorList>
            <person name="Schulze-Gahmen U."/>
            <person name="Rini J.M."/>
            <person name="Wilson I.A."/>
        </authorList>
    </citation>
    <scope>X-RAY CRYSTALLOGRAPHY (2.8 ANGSTROMS) OF 117-124</scope>
</reference>
<dbReference type="EMBL" id="DQ874876">
    <property type="protein sequence ID" value="ABH05852.1"/>
    <property type="molecule type" value="Genomic_RNA"/>
</dbReference>
<dbReference type="PDB" id="1FRG">
    <property type="method" value="X-ray"/>
    <property type="resolution" value="2.80 A"/>
    <property type="chains" value="P=117-124"/>
</dbReference>
<dbReference type="PDB" id="1HGD">
    <property type="method" value="X-ray"/>
    <property type="resolution" value="2.70 A"/>
    <property type="chains" value="A/C/E=17-344, B/D/F=346-520"/>
</dbReference>
<dbReference type="PDB" id="1HGE">
    <property type="method" value="X-ray"/>
    <property type="resolution" value="2.60 A"/>
    <property type="chains" value="A/C/E=17-344, B/D/F=346-520"/>
</dbReference>
<dbReference type="PDB" id="1HGF">
    <property type="method" value="X-ray"/>
    <property type="resolution" value="3.00 A"/>
    <property type="chains" value="A/C/E=17-344, B/D/F=346-520"/>
</dbReference>
<dbReference type="PDB" id="1HGH">
    <property type="method" value="X-ray"/>
    <property type="resolution" value="2.70 A"/>
    <property type="chains" value="A/C/E=17-344, B/D/F=346-520"/>
</dbReference>
<dbReference type="PDB" id="1HGI">
    <property type="method" value="X-ray"/>
    <property type="resolution" value="2.70 A"/>
    <property type="chains" value="A/C/E=17-344, B/D/F=346-520"/>
</dbReference>
<dbReference type="PDB" id="1HGJ">
    <property type="method" value="X-ray"/>
    <property type="resolution" value="2.70 A"/>
    <property type="chains" value="A/C/E=17-344, B/D/F=346-520"/>
</dbReference>
<dbReference type="PDB" id="1KEN">
    <property type="method" value="X-ray"/>
    <property type="resolution" value="3.50 A"/>
    <property type="chains" value="A/C/E=17-344, B/D/F=346-520"/>
</dbReference>
<dbReference type="PDB" id="1QFU">
    <property type="method" value="X-ray"/>
    <property type="resolution" value="2.80 A"/>
    <property type="chains" value="A=17-344, B=346-520"/>
</dbReference>
<dbReference type="PDBsum" id="1FRG"/>
<dbReference type="PDBsum" id="1HGD"/>
<dbReference type="PDBsum" id="1HGE"/>
<dbReference type="PDBsum" id="1HGF"/>
<dbReference type="PDBsum" id="1HGH"/>
<dbReference type="PDBsum" id="1HGI"/>
<dbReference type="PDBsum" id="1HGJ"/>
<dbReference type="PDBsum" id="1KEN"/>
<dbReference type="PDBsum" id="1QFU"/>
<dbReference type="BMRB" id="P03438"/>
<dbReference type="SMR" id="P03438"/>
<dbReference type="DIP" id="DIP-48621N"/>
<dbReference type="BindingDB" id="P03438"/>
<dbReference type="ChEMBL" id="CHEMBL4918"/>
<dbReference type="UniLectin" id="P03438"/>
<dbReference type="GlyCosmos" id="P03438">
    <property type="glycosylation" value="6 sites, No reported glycans"/>
</dbReference>
<dbReference type="ABCD" id="P03438">
    <property type="antibodies" value="2 sequenced antibodies"/>
</dbReference>
<dbReference type="EvolutionaryTrace" id="P03438"/>
<dbReference type="GO" id="GO:0020002">
    <property type="term" value="C:host cell plasma membrane"/>
    <property type="evidence" value="ECO:0007669"/>
    <property type="project" value="UniProtKB-SubCell"/>
</dbReference>
<dbReference type="GO" id="GO:0016020">
    <property type="term" value="C:membrane"/>
    <property type="evidence" value="ECO:0007669"/>
    <property type="project" value="UniProtKB-UniRule"/>
</dbReference>
<dbReference type="GO" id="GO:0019031">
    <property type="term" value="C:viral envelope"/>
    <property type="evidence" value="ECO:0007669"/>
    <property type="project" value="UniProtKB-UniRule"/>
</dbReference>
<dbReference type="GO" id="GO:0055036">
    <property type="term" value="C:virion membrane"/>
    <property type="evidence" value="ECO:0007669"/>
    <property type="project" value="UniProtKB-SubCell"/>
</dbReference>
<dbReference type="GO" id="GO:0046789">
    <property type="term" value="F:host cell surface receptor binding"/>
    <property type="evidence" value="ECO:0007669"/>
    <property type="project" value="UniProtKB-UniRule"/>
</dbReference>
<dbReference type="GO" id="GO:0075512">
    <property type="term" value="P:clathrin-dependent endocytosis of virus by host cell"/>
    <property type="evidence" value="ECO:0007669"/>
    <property type="project" value="UniProtKB-UniRule"/>
</dbReference>
<dbReference type="GO" id="GO:0039654">
    <property type="term" value="P:fusion of virus membrane with host endosome membrane"/>
    <property type="evidence" value="ECO:0007669"/>
    <property type="project" value="UniProtKB-UniRule"/>
</dbReference>
<dbReference type="GO" id="GO:0019064">
    <property type="term" value="P:fusion of virus membrane with host plasma membrane"/>
    <property type="evidence" value="ECO:0007669"/>
    <property type="project" value="InterPro"/>
</dbReference>
<dbReference type="GO" id="GO:0046761">
    <property type="term" value="P:viral budding from plasma membrane"/>
    <property type="evidence" value="ECO:0007669"/>
    <property type="project" value="UniProtKB-UniRule"/>
</dbReference>
<dbReference type="GO" id="GO:0019062">
    <property type="term" value="P:virion attachment to host cell"/>
    <property type="evidence" value="ECO:0007669"/>
    <property type="project" value="UniProtKB-KW"/>
</dbReference>
<dbReference type="FunFam" id="3.90.20.10:FF:000001">
    <property type="entry name" value="Hemagglutinin"/>
    <property type="match status" value="1"/>
</dbReference>
<dbReference type="FunFam" id="3.90.209.20:FF:000001">
    <property type="entry name" value="Hemagglutinin"/>
    <property type="match status" value="1"/>
</dbReference>
<dbReference type="Gene3D" id="3.90.20.10">
    <property type="match status" value="1"/>
</dbReference>
<dbReference type="Gene3D" id="3.90.209.20">
    <property type="match status" value="1"/>
</dbReference>
<dbReference type="HAMAP" id="MF_04072">
    <property type="entry name" value="INFV_HEMA"/>
    <property type="match status" value="1"/>
</dbReference>
<dbReference type="InterPro" id="IPR008980">
    <property type="entry name" value="Capsid_hemagglutn"/>
</dbReference>
<dbReference type="InterPro" id="IPR013828">
    <property type="entry name" value="Hemagglutn_HA1_a/b_dom_sf"/>
</dbReference>
<dbReference type="InterPro" id="IPR000149">
    <property type="entry name" value="Hemagglutn_influenz_A"/>
</dbReference>
<dbReference type="InterPro" id="IPR001364">
    <property type="entry name" value="Hemagglutn_influenz_A/B"/>
</dbReference>
<dbReference type="Pfam" id="PF00509">
    <property type="entry name" value="Hemagglutinin"/>
    <property type="match status" value="1"/>
</dbReference>
<dbReference type="PRINTS" id="PR00330">
    <property type="entry name" value="HEMAGGLUTN1"/>
</dbReference>
<dbReference type="PRINTS" id="PR00329">
    <property type="entry name" value="HEMAGGLUTN12"/>
</dbReference>
<dbReference type="SUPFAM" id="SSF58064">
    <property type="entry name" value="Influenza hemagglutinin (stalk)"/>
    <property type="match status" value="1"/>
</dbReference>
<dbReference type="SUPFAM" id="SSF49818">
    <property type="entry name" value="Viral protein domain"/>
    <property type="match status" value="1"/>
</dbReference>
<organismHost>
    <name type="scientific">Aves</name>
    <dbReference type="NCBI Taxonomy" id="8782"/>
</organismHost>
<organismHost>
    <name type="scientific">Cetacea</name>
    <name type="common">whales</name>
    <dbReference type="NCBI Taxonomy" id="9721"/>
</organismHost>
<organismHost>
    <name type="scientific">Homo sapiens</name>
    <name type="common">Human</name>
    <dbReference type="NCBI Taxonomy" id="9606"/>
</organismHost>
<organismHost>
    <name type="scientific">Phocidae</name>
    <name type="common">true seals</name>
    <dbReference type="NCBI Taxonomy" id="9709"/>
</organismHost>
<organismHost>
    <name type="scientific">Sus scrofa</name>
    <name type="common">Pig</name>
    <dbReference type="NCBI Taxonomy" id="9823"/>
</organismHost>
<feature type="signal peptide" evidence="1">
    <location>
        <begin position="1"/>
        <end position="16"/>
    </location>
</feature>
<feature type="chain" id="PRO_0000440365" description="Hemagglutinin" evidence="1">
    <location>
        <begin position="17"/>
        <end position="566"/>
    </location>
</feature>
<feature type="chain" id="PRO_0000039071" description="Hemagglutinin HA1 chain">
    <location>
        <begin position="17"/>
        <end position="344"/>
    </location>
</feature>
<feature type="chain" id="PRO_0000280048" description="Hemagglutinin HA2 chain" evidence="1">
    <location>
        <begin position="346"/>
        <end position="566"/>
    </location>
</feature>
<feature type="topological domain" description="Extracellular" evidence="1">
    <location>
        <begin position="17"/>
        <end position="530"/>
    </location>
</feature>
<feature type="transmembrane region" description="Helical" evidence="1">
    <location>
        <begin position="531"/>
        <end position="551"/>
    </location>
</feature>
<feature type="topological domain" description="Cytoplasmic" evidence="1">
    <location>
        <begin position="552"/>
        <end position="566"/>
    </location>
</feature>
<feature type="site" description="Cleavage; by host" evidence="1">
    <location>
        <begin position="345"/>
        <end position="346"/>
    </location>
</feature>
<feature type="lipid moiety-binding region" description="S-palmitoyl cysteine; by host" evidence="1">
    <location>
        <position position="555"/>
    </location>
</feature>
<feature type="lipid moiety-binding region" description="S-palmitoyl cysteine; by host" evidence="1">
    <location>
        <position position="562"/>
    </location>
</feature>
<feature type="lipid moiety-binding region" description="S-palmitoyl cysteine; by host" evidence="1">
    <location>
        <position position="565"/>
    </location>
</feature>
<feature type="glycosylation site" description="N-linked (GlcNAc...) asparagine; by host" evidence="1">
    <location>
        <position position="24"/>
    </location>
</feature>
<feature type="glycosylation site" description="N-linked (GlcNAc...) asparagine; by host" evidence="1">
    <location>
        <position position="38"/>
    </location>
</feature>
<feature type="glycosylation site" description="N-linked (GlcNAc...) asparagine; by host" evidence="1">
    <location>
        <position position="54"/>
    </location>
</feature>
<feature type="glycosylation site" description="N-linked (GlcNAc...) asparagine; by host" evidence="1">
    <location>
        <position position="181"/>
    </location>
</feature>
<feature type="glycosylation site" description="N-linked (GlcNAc...) asparagine; by host" evidence="1">
    <location>
        <position position="301"/>
    </location>
</feature>
<feature type="glycosylation site" description="N-linked (GlcNAc...) asparagine; by host" evidence="1">
    <location>
        <position position="499"/>
    </location>
</feature>
<feature type="disulfide bond" description="Interchain (between HA1 and HA2 chains)" evidence="1">
    <location>
        <begin position="30"/>
        <end position="482"/>
    </location>
</feature>
<feature type="disulfide bond" evidence="1">
    <location>
        <begin position="68"/>
        <end position="293"/>
    </location>
</feature>
<feature type="disulfide bond" evidence="1">
    <location>
        <begin position="80"/>
        <end position="92"/>
    </location>
</feature>
<feature type="disulfide bond" evidence="1">
    <location>
        <begin position="113"/>
        <end position="155"/>
    </location>
</feature>
<feature type="disulfide bond" evidence="1">
    <location>
        <begin position="297"/>
        <end position="321"/>
    </location>
</feature>
<feature type="disulfide bond" evidence="1">
    <location>
        <begin position="489"/>
        <end position="493"/>
    </location>
</feature>
<feature type="sequence conflict" description="In Ref. 2." evidence="3" ref="2">
    <original>A</original>
    <variation>D</variation>
    <location>
        <position position="27"/>
    </location>
</feature>
<feature type="sequence conflict" description="In Ref. 2." evidence="3" ref="2">
    <original>K</original>
    <variation>N</variation>
    <location>
        <position position="97"/>
    </location>
</feature>
<feature type="sequence conflict" description="In Ref. 2." evidence="3" ref="2">
    <original>I</original>
    <variation>N</variation>
    <location>
        <position position="153"/>
    </location>
</feature>
<feature type="sequence conflict" description="In Ref. 2." evidence="3" ref="2">
    <original>D</original>
    <variation>G</variation>
    <location>
        <position position="160"/>
    </location>
</feature>
<feature type="sequence conflict" description="In Ref. 2." evidence="3" ref="2">
    <original>E</original>
    <variation>G</variation>
    <location>
        <position position="174"/>
    </location>
</feature>
<feature type="strand" evidence="4">
    <location>
        <begin position="27"/>
        <end position="34"/>
    </location>
</feature>
<feature type="strand" evidence="4">
    <location>
        <begin position="40"/>
        <end position="42"/>
    </location>
</feature>
<feature type="strand" evidence="4">
    <location>
        <begin position="50"/>
        <end position="53"/>
    </location>
</feature>
<feature type="strand" evidence="4">
    <location>
        <begin position="55"/>
        <end position="57"/>
    </location>
</feature>
<feature type="strand" evidence="4">
    <location>
        <begin position="65"/>
        <end position="72"/>
    </location>
</feature>
<feature type="strand" evidence="4">
    <location>
        <begin position="74"/>
        <end position="76"/>
    </location>
</feature>
<feature type="helix" evidence="4">
    <location>
        <begin position="82"/>
        <end position="87"/>
    </location>
</feature>
<feature type="helix" evidence="4">
    <location>
        <begin position="90"/>
        <end position="95"/>
    </location>
</feature>
<feature type="strand" evidence="4">
    <location>
        <begin position="101"/>
        <end position="105"/>
    </location>
</feature>
<feature type="helix" evidence="4">
    <location>
        <begin position="121"/>
        <end position="131"/>
    </location>
</feature>
<feature type="strand" evidence="4">
    <location>
        <begin position="136"/>
        <end position="138"/>
    </location>
</feature>
<feature type="strand" evidence="4">
    <location>
        <begin position="146"/>
        <end position="150"/>
    </location>
</feature>
<feature type="strand" evidence="4">
    <location>
        <begin position="152"/>
        <end position="157"/>
    </location>
</feature>
<feature type="strand" evidence="4">
    <location>
        <begin position="160"/>
        <end position="162"/>
    </location>
</feature>
<feature type="strand" evidence="4">
    <location>
        <begin position="167"/>
        <end position="173"/>
    </location>
</feature>
<feature type="strand" evidence="4">
    <location>
        <begin position="180"/>
        <end position="185"/>
    </location>
</feature>
<feature type="strand" evidence="4">
    <location>
        <begin position="188"/>
        <end position="190"/>
    </location>
</feature>
<feature type="strand" evidence="4">
    <location>
        <begin position="192"/>
        <end position="200"/>
    </location>
</feature>
<feature type="helix" evidence="4">
    <location>
        <begin position="204"/>
        <end position="211"/>
    </location>
</feature>
<feature type="strand" evidence="4">
    <location>
        <begin position="212"/>
        <end position="215"/>
    </location>
</feature>
<feature type="strand" evidence="4">
    <location>
        <begin position="217"/>
        <end position="221"/>
    </location>
</feature>
<feature type="strand" evidence="4">
    <location>
        <begin position="226"/>
        <end position="229"/>
    </location>
</feature>
<feature type="strand" evidence="5">
    <location>
        <begin position="239"/>
        <end position="241"/>
    </location>
</feature>
<feature type="strand" evidence="4">
    <location>
        <begin position="245"/>
        <end position="253"/>
    </location>
</feature>
<feature type="strand" evidence="4">
    <location>
        <begin position="258"/>
        <end position="265"/>
    </location>
</feature>
<feature type="strand" evidence="4">
    <location>
        <begin position="267"/>
        <end position="270"/>
    </location>
</feature>
<feature type="strand" evidence="4">
    <location>
        <begin position="272"/>
        <end position="275"/>
    </location>
</feature>
<feature type="strand" evidence="4">
    <location>
        <begin position="282"/>
        <end position="285"/>
    </location>
</feature>
<feature type="strand" evidence="4">
    <location>
        <begin position="290"/>
        <end position="294"/>
    </location>
</feature>
<feature type="strand" evidence="4">
    <location>
        <begin position="296"/>
        <end position="299"/>
    </location>
</feature>
<feature type="strand" evidence="4">
    <location>
        <begin position="302"/>
        <end position="304"/>
    </location>
</feature>
<feature type="strand" evidence="4">
    <location>
        <begin position="308"/>
        <end position="311"/>
    </location>
</feature>
<feature type="strand" evidence="4">
    <location>
        <begin position="318"/>
        <end position="320"/>
    </location>
</feature>
<feature type="strand" evidence="4">
    <location>
        <begin position="331"/>
        <end position="333"/>
    </location>
</feature>
<feature type="turn" evidence="4">
    <location>
        <begin position="352"/>
        <end position="354"/>
    </location>
</feature>
<feature type="strand" evidence="4">
    <location>
        <begin position="366"/>
        <end position="373"/>
    </location>
</feature>
<feature type="strand" evidence="4">
    <location>
        <begin position="376"/>
        <end position="382"/>
    </location>
</feature>
<feature type="helix" evidence="4">
    <location>
        <begin position="383"/>
        <end position="401"/>
    </location>
</feature>
<feature type="helix" evidence="4">
    <location>
        <begin position="421"/>
        <end position="471"/>
    </location>
</feature>
<feature type="helix" evidence="4">
    <location>
        <begin position="472"/>
        <end position="474"/>
    </location>
</feature>
<feature type="strand" evidence="4">
    <location>
        <begin position="475"/>
        <end position="477"/>
    </location>
</feature>
<feature type="strand" evidence="4">
    <location>
        <begin position="479"/>
        <end position="485"/>
    </location>
</feature>
<feature type="helix" evidence="4">
    <location>
        <begin position="491"/>
        <end position="498"/>
    </location>
</feature>
<feature type="helix" evidence="4">
    <location>
        <begin position="505"/>
        <end position="507"/>
    </location>
</feature>
<feature type="helix" evidence="4">
    <location>
        <begin position="508"/>
        <end position="515"/>
    </location>
</feature>
<feature type="turn" evidence="4">
    <location>
        <begin position="516"/>
        <end position="519"/>
    </location>
</feature>
<accession>P03438</accession>
<accession>Q0PDM6</accession>